<sequence length="340" mass="34718">MIILAIESSCDETGVGIADLRDDGTVTLLADEVASSVDEHARFGGVVPEIASRAHLEALGPTMRRALDAAGIERPDVVAATIGPGLAGALLVGVAAAKAYAAGWGVPFYGVNHLGGHLAADVYDHGPLPESVGLLVSGGHTHLLHVRSLGEPIIELGSTVDDAAGEAYDKVARLLGLGYPGGRVLDELARTGDRDAIVFPRGMTGPRDDPYTFSFSGLKTAVARYVEAHPEASHADVAAGFQESVADVLTAKAVRAATDLGVSTLLIAGGVAANSRLRELAEERCAAAGLTLRVPRPRLCTDNGAMIASFAAHLIAAGAQPSPLDAASDPGLPVVKGQVA</sequence>
<name>TSAD_MYCS2</name>
<organism>
    <name type="scientific">Mycolicibacterium smegmatis (strain ATCC 700084 / mc(2)155)</name>
    <name type="common">Mycobacterium smegmatis</name>
    <dbReference type="NCBI Taxonomy" id="246196"/>
    <lineage>
        <taxon>Bacteria</taxon>
        <taxon>Bacillati</taxon>
        <taxon>Actinomycetota</taxon>
        <taxon>Actinomycetes</taxon>
        <taxon>Mycobacteriales</taxon>
        <taxon>Mycobacteriaceae</taxon>
        <taxon>Mycolicibacterium</taxon>
    </lineage>
</organism>
<keyword id="KW-0012">Acyltransferase</keyword>
<keyword id="KW-0963">Cytoplasm</keyword>
<keyword id="KW-0408">Iron</keyword>
<keyword id="KW-0479">Metal-binding</keyword>
<keyword id="KW-1185">Reference proteome</keyword>
<keyword id="KW-0808">Transferase</keyword>
<keyword id="KW-0819">tRNA processing</keyword>
<gene>
    <name evidence="1" type="primary">tsaD</name>
    <name type="synonym">gcp</name>
    <name type="ordered locus">MSMEG_1580</name>
    <name type="ordered locus">MSMEI_1542</name>
</gene>
<accession>A0QSS1</accession>
<accession>I7F8X5</accession>
<proteinExistence type="inferred from homology"/>
<protein>
    <recommendedName>
        <fullName evidence="1">tRNA N6-adenosine threonylcarbamoyltransferase</fullName>
        <ecNumber evidence="1">2.3.1.234</ecNumber>
    </recommendedName>
    <alternativeName>
        <fullName evidence="1">N6-L-threonylcarbamoyladenine synthase</fullName>
        <shortName evidence="1">t(6)A synthase</shortName>
    </alternativeName>
    <alternativeName>
        <fullName evidence="1">t(6)A37 threonylcarbamoyladenosine biosynthesis protein TsaD</fullName>
    </alternativeName>
    <alternativeName>
        <fullName evidence="1">tRNA threonylcarbamoyladenosine biosynthesis protein TsaD</fullName>
    </alternativeName>
</protein>
<evidence type="ECO:0000255" key="1">
    <source>
        <dbReference type="HAMAP-Rule" id="MF_01445"/>
    </source>
</evidence>
<feature type="chain" id="PRO_0000303431" description="tRNA N6-adenosine threonylcarbamoyltransferase">
    <location>
        <begin position="1"/>
        <end position="340"/>
    </location>
</feature>
<feature type="binding site" evidence="1">
    <location>
        <position position="113"/>
    </location>
    <ligand>
        <name>Fe cation</name>
        <dbReference type="ChEBI" id="CHEBI:24875"/>
    </ligand>
</feature>
<feature type="binding site" evidence="1">
    <location>
        <position position="117"/>
    </location>
    <ligand>
        <name>Fe cation</name>
        <dbReference type="ChEBI" id="CHEBI:24875"/>
    </ligand>
</feature>
<feature type="binding site" evidence="1">
    <location>
        <begin position="135"/>
        <end position="139"/>
    </location>
    <ligand>
        <name>substrate</name>
    </ligand>
</feature>
<feature type="binding site" evidence="1">
    <location>
        <position position="169"/>
    </location>
    <ligand>
        <name>substrate</name>
    </ligand>
</feature>
<feature type="binding site" evidence="1">
    <location>
        <position position="182"/>
    </location>
    <ligand>
        <name>substrate</name>
    </ligand>
</feature>
<feature type="binding site" evidence="1">
    <location>
        <position position="186"/>
    </location>
    <ligand>
        <name>substrate</name>
    </ligand>
</feature>
<feature type="binding site" evidence="1">
    <location>
        <position position="274"/>
    </location>
    <ligand>
        <name>substrate</name>
    </ligand>
</feature>
<feature type="binding site" evidence="1">
    <location>
        <position position="302"/>
    </location>
    <ligand>
        <name>Fe cation</name>
        <dbReference type="ChEBI" id="CHEBI:24875"/>
    </ligand>
</feature>
<reference key="1">
    <citation type="submission" date="2006-10" db="EMBL/GenBank/DDBJ databases">
        <authorList>
            <person name="Fleischmann R.D."/>
            <person name="Dodson R.J."/>
            <person name="Haft D.H."/>
            <person name="Merkel J.S."/>
            <person name="Nelson W.C."/>
            <person name="Fraser C.M."/>
        </authorList>
    </citation>
    <scope>NUCLEOTIDE SEQUENCE [LARGE SCALE GENOMIC DNA]</scope>
    <source>
        <strain>ATCC 700084 / mc(2)155</strain>
    </source>
</reference>
<reference key="2">
    <citation type="journal article" date="2007" name="Genome Biol.">
        <title>Interrupted coding sequences in Mycobacterium smegmatis: authentic mutations or sequencing errors?</title>
        <authorList>
            <person name="Deshayes C."/>
            <person name="Perrodou E."/>
            <person name="Gallien S."/>
            <person name="Euphrasie D."/>
            <person name="Schaeffer C."/>
            <person name="Van-Dorsselaer A."/>
            <person name="Poch O."/>
            <person name="Lecompte O."/>
            <person name="Reyrat J.-M."/>
        </authorList>
    </citation>
    <scope>NUCLEOTIDE SEQUENCE [LARGE SCALE GENOMIC DNA]</scope>
    <source>
        <strain>ATCC 700084 / mc(2)155</strain>
    </source>
</reference>
<reference key="3">
    <citation type="journal article" date="2009" name="Genome Res.">
        <title>Ortho-proteogenomics: multiple proteomes investigation through orthology and a new MS-based protocol.</title>
        <authorList>
            <person name="Gallien S."/>
            <person name="Perrodou E."/>
            <person name="Carapito C."/>
            <person name="Deshayes C."/>
            <person name="Reyrat J.-M."/>
            <person name="Van Dorsselaer A."/>
            <person name="Poch O."/>
            <person name="Schaeffer C."/>
            <person name="Lecompte O."/>
        </authorList>
    </citation>
    <scope>NUCLEOTIDE SEQUENCE [LARGE SCALE GENOMIC DNA]</scope>
    <source>
        <strain>ATCC 700084 / mc(2)155</strain>
    </source>
</reference>
<comment type="function">
    <text evidence="1">Required for the formation of a threonylcarbamoyl group on adenosine at position 37 (t(6)A37) in tRNAs that read codons beginning with adenine. Is involved in the transfer of the threonylcarbamoyl moiety of threonylcarbamoyl-AMP (TC-AMP) to the N6 group of A37, together with TsaE and TsaB. TsaD likely plays a direct catalytic role in this reaction.</text>
</comment>
<comment type="catalytic activity">
    <reaction evidence="1">
        <text>L-threonylcarbamoyladenylate + adenosine(37) in tRNA = N(6)-L-threonylcarbamoyladenosine(37) in tRNA + AMP + H(+)</text>
        <dbReference type="Rhea" id="RHEA:37059"/>
        <dbReference type="Rhea" id="RHEA-COMP:10162"/>
        <dbReference type="Rhea" id="RHEA-COMP:10163"/>
        <dbReference type="ChEBI" id="CHEBI:15378"/>
        <dbReference type="ChEBI" id="CHEBI:73682"/>
        <dbReference type="ChEBI" id="CHEBI:74411"/>
        <dbReference type="ChEBI" id="CHEBI:74418"/>
        <dbReference type="ChEBI" id="CHEBI:456215"/>
        <dbReference type="EC" id="2.3.1.234"/>
    </reaction>
</comment>
<comment type="cofactor">
    <cofactor evidence="1">
        <name>Fe(2+)</name>
        <dbReference type="ChEBI" id="CHEBI:29033"/>
    </cofactor>
    <text evidence="1">Binds 1 Fe(2+) ion per subunit.</text>
</comment>
<comment type="subcellular location">
    <subcellularLocation>
        <location evidence="1">Cytoplasm</location>
    </subcellularLocation>
</comment>
<comment type="similarity">
    <text evidence="1">Belongs to the KAE1 / TsaD family.</text>
</comment>
<dbReference type="EC" id="2.3.1.234" evidence="1"/>
<dbReference type="EMBL" id="CP000480">
    <property type="protein sequence ID" value="ABK75193.1"/>
    <property type="molecule type" value="Genomic_DNA"/>
</dbReference>
<dbReference type="EMBL" id="CP001663">
    <property type="protein sequence ID" value="AFP38015.1"/>
    <property type="molecule type" value="Genomic_DNA"/>
</dbReference>
<dbReference type="RefSeq" id="WP_011727752.1">
    <property type="nucleotide sequence ID" value="NZ_SIJM01000016.1"/>
</dbReference>
<dbReference type="RefSeq" id="YP_885959.1">
    <property type="nucleotide sequence ID" value="NC_008596.1"/>
</dbReference>
<dbReference type="SMR" id="A0QSS1"/>
<dbReference type="STRING" id="246196.MSMEG_1580"/>
<dbReference type="PaxDb" id="246196-MSMEI_1542"/>
<dbReference type="GeneID" id="93456419"/>
<dbReference type="KEGG" id="msb:LJ00_07890"/>
<dbReference type="KEGG" id="msg:MSMEI_1542"/>
<dbReference type="KEGG" id="msm:MSMEG_1580"/>
<dbReference type="PATRIC" id="fig|246196.19.peg.1566"/>
<dbReference type="eggNOG" id="COG0533">
    <property type="taxonomic scope" value="Bacteria"/>
</dbReference>
<dbReference type="OrthoDB" id="9806197at2"/>
<dbReference type="Proteomes" id="UP000000757">
    <property type="component" value="Chromosome"/>
</dbReference>
<dbReference type="Proteomes" id="UP000006158">
    <property type="component" value="Chromosome"/>
</dbReference>
<dbReference type="GO" id="GO:0005737">
    <property type="term" value="C:cytoplasm"/>
    <property type="evidence" value="ECO:0007669"/>
    <property type="project" value="UniProtKB-SubCell"/>
</dbReference>
<dbReference type="GO" id="GO:0005506">
    <property type="term" value="F:iron ion binding"/>
    <property type="evidence" value="ECO:0007669"/>
    <property type="project" value="UniProtKB-UniRule"/>
</dbReference>
<dbReference type="GO" id="GO:0061711">
    <property type="term" value="F:N(6)-L-threonylcarbamoyladenine synthase activity"/>
    <property type="evidence" value="ECO:0007669"/>
    <property type="project" value="UniProtKB-EC"/>
</dbReference>
<dbReference type="GO" id="GO:0002949">
    <property type="term" value="P:tRNA threonylcarbamoyladenosine modification"/>
    <property type="evidence" value="ECO:0007669"/>
    <property type="project" value="UniProtKB-UniRule"/>
</dbReference>
<dbReference type="CDD" id="cd24133">
    <property type="entry name" value="ASKHA_NBD_TsaD_bac"/>
    <property type="match status" value="1"/>
</dbReference>
<dbReference type="FunFam" id="3.30.420.40:FF:000012">
    <property type="entry name" value="tRNA N6-adenosine threonylcarbamoyltransferase"/>
    <property type="match status" value="1"/>
</dbReference>
<dbReference type="FunFam" id="3.30.420.40:FF:000040">
    <property type="entry name" value="tRNA N6-adenosine threonylcarbamoyltransferase"/>
    <property type="match status" value="1"/>
</dbReference>
<dbReference type="Gene3D" id="3.30.420.40">
    <property type="match status" value="2"/>
</dbReference>
<dbReference type="HAMAP" id="MF_01445">
    <property type="entry name" value="TsaD"/>
    <property type="match status" value="1"/>
</dbReference>
<dbReference type="InterPro" id="IPR043129">
    <property type="entry name" value="ATPase_NBD"/>
</dbReference>
<dbReference type="InterPro" id="IPR000905">
    <property type="entry name" value="Gcp-like_dom"/>
</dbReference>
<dbReference type="InterPro" id="IPR017861">
    <property type="entry name" value="KAE1/TsaD"/>
</dbReference>
<dbReference type="InterPro" id="IPR017860">
    <property type="entry name" value="Peptidase_M22_CS"/>
</dbReference>
<dbReference type="InterPro" id="IPR022450">
    <property type="entry name" value="TsaD"/>
</dbReference>
<dbReference type="NCBIfam" id="TIGR00329">
    <property type="entry name" value="gcp_kae1"/>
    <property type="match status" value="1"/>
</dbReference>
<dbReference type="NCBIfam" id="TIGR03723">
    <property type="entry name" value="T6A_TsaD_YgjD"/>
    <property type="match status" value="1"/>
</dbReference>
<dbReference type="PANTHER" id="PTHR11735">
    <property type="entry name" value="TRNA N6-ADENOSINE THREONYLCARBAMOYLTRANSFERASE"/>
    <property type="match status" value="1"/>
</dbReference>
<dbReference type="PANTHER" id="PTHR11735:SF6">
    <property type="entry name" value="TRNA N6-ADENOSINE THREONYLCARBAMOYLTRANSFERASE, MITOCHONDRIAL"/>
    <property type="match status" value="1"/>
</dbReference>
<dbReference type="Pfam" id="PF00814">
    <property type="entry name" value="TsaD"/>
    <property type="match status" value="1"/>
</dbReference>
<dbReference type="PRINTS" id="PR00789">
    <property type="entry name" value="OSIALOPTASE"/>
</dbReference>
<dbReference type="SUPFAM" id="SSF53067">
    <property type="entry name" value="Actin-like ATPase domain"/>
    <property type="match status" value="1"/>
</dbReference>
<dbReference type="PROSITE" id="PS01016">
    <property type="entry name" value="GLYCOPROTEASE"/>
    <property type="match status" value="1"/>
</dbReference>